<sequence length="413" mass="47572">MGQLFSSPKSDENNDLPSSFTGYFKKFNTGRKIISQEILNLIELRMRKGNIQLTNSAISDALKEIDSSVLNVAVTGETGSGKSSFINTLRGIGNEEEGAAKTGVVEVTMERHPYKHPNIPNVVFWDLPGIGSTNFPPNTYLEKMKFYEYDFFIIISATRFKKNDIDIAKAISMMKKEFYFVRTKVDSDITNEADGKPQTFDKEKVLQDIRLNCVNTFRENGIAEPPIFLLSNKNVCHYDFPVLMDKLISDLPIYKRHNFMVSLPNITDSVIEKKRQFLKQRIWLEGFAADLVNIIPSLTFLLDSDLETLKKSMKFYRTVFGVDETSLQRLARDWEIEVDQVEAMIKSPAVFKPTDEETIQERLSRYIQEFCLANGYLLPKNSFLKEIFYLKYYFLDMVTEDAKTLLKEICLRN</sequence>
<protein>
    <recommendedName>
        <fullName>Interferon-inducible GTPase 1</fullName>
        <ecNumber evidence="3 11 15">3.6.5.-</ecNumber>
    </recommendedName>
</protein>
<dbReference type="EC" id="3.6.5.-" evidence="3 11 15"/>
<dbReference type="EMBL" id="AJ007971">
    <property type="protein sequence ID" value="CAA07798.1"/>
    <property type="molecule type" value="mRNA"/>
</dbReference>
<dbReference type="EMBL" id="AF194871">
    <property type="protein sequence ID" value="AAF07195.1"/>
    <property type="molecule type" value="mRNA"/>
</dbReference>
<dbReference type="EMBL" id="AK153060">
    <property type="protein sequence ID" value="BAE31686.1"/>
    <property type="molecule type" value="mRNA"/>
</dbReference>
<dbReference type="EMBL" id="CT010300">
    <property type="protein sequence ID" value="CAJ18508.1"/>
    <property type="molecule type" value="mRNA"/>
</dbReference>
<dbReference type="EMBL" id="BC004649">
    <property type="protein sequence ID" value="AAH04649.1"/>
    <property type="molecule type" value="mRNA"/>
</dbReference>
<dbReference type="CCDS" id="CCDS29270.1"/>
<dbReference type="RefSeq" id="NP_001139747.1">
    <property type="nucleotide sequence ID" value="NM_001146275.1"/>
</dbReference>
<dbReference type="RefSeq" id="NP_068564.4">
    <property type="nucleotide sequence ID" value="NM_021792.4"/>
</dbReference>
<dbReference type="RefSeq" id="XP_011245279.1">
    <property type="nucleotide sequence ID" value="XM_011246977.2"/>
</dbReference>
<dbReference type="RefSeq" id="XP_011245280.1">
    <property type="nucleotide sequence ID" value="XM_011246978.4"/>
</dbReference>
<dbReference type="RefSeq" id="XP_011245281.1">
    <property type="nucleotide sequence ID" value="XM_011246979.4"/>
</dbReference>
<dbReference type="RefSeq" id="XP_011245282.1">
    <property type="nucleotide sequence ID" value="XM_011246980.3"/>
</dbReference>
<dbReference type="RefSeq" id="XP_030106417.1">
    <property type="nucleotide sequence ID" value="XM_030250557.2"/>
</dbReference>
<dbReference type="RefSeq" id="XP_030106419.1">
    <property type="nucleotide sequence ID" value="XM_030250559.2"/>
</dbReference>
<dbReference type="RefSeq" id="XP_036017120.1">
    <property type="nucleotide sequence ID" value="XM_036161227.1"/>
</dbReference>
<dbReference type="PDB" id="1TPZ">
    <property type="method" value="X-ray"/>
    <property type="resolution" value="2.00 A"/>
    <property type="chains" value="A/B=1-411"/>
</dbReference>
<dbReference type="PDB" id="1TQ2">
    <property type="method" value="X-ray"/>
    <property type="resolution" value="2.70 A"/>
    <property type="chains" value="A/B=1-411"/>
</dbReference>
<dbReference type="PDB" id="1TQ4">
    <property type="method" value="X-ray"/>
    <property type="resolution" value="1.95 A"/>
    <property type="chains" value="A=1-413"/>
</dbReference>
<dbReference type="PDB" id="1TQ6">
    <property type="method" value="X-ray"/>
    <property type="resolution" value="2.70 A"/>
    <property type="chains" value="A=1-413"/>
</dbReference>
<dbReference type="PDB" id="1TQD">
    <property type="method" value="X-ray"/>
    <property type="resolution" value="2.30 A"/>
    <property type="chains" value="A/B=1-413"/>
</dbReference>
<dbReference type="PDB" id="4LV5">
    <property type="method" value="X-ray"/>
    <property type="resolution" value="1.70 A"/>
    <property type="chains" value="B=1-413"/>
</dbReference>
<dbReference type="PDB" id="4LV8">
    <property type="method" value="X-ray"/>
    <property type="resolution" value="1.72 A"/>
    <property type="chains" value="B=1-413"/>
</dbReference>
<dbReference type="PDB" id="5FPH">
    <property type="method" value="X-ray"/>
    <property type="resolution" value="3.20 A"/>
    <property type="chains" value="A/B/C/D/E/F/G=1-413"/>
</dbReference>
<dbReference type="PDBsum" id="1TPZ"/>
<dbReference type="PDBsum" id="1TQ2"/>
<dbReference type="PDBsum" id="1TQ4"/>
<dbReference type="PDBsum" id="1TQ6"/>
<dbReference type="PDBsum" id="1TQD"/>
<dbReference type="PDBsum" id="4LV5"/>
<dbReference type="PDBsum" id="4LV8"/>
<dbReference type="PDBsum" id="5FPH"/>
<dbReference type="SMR" id="Q9QZ85"/>
<dbReference type="BioGRID" id="208563">
    <property type="interactions" value="4"/>
</dbReference>
<dbReference type="CORUM" id="Q9QZ85"/>
<dbReference type="DIP" id="DIP-58958N"/>
<dbReference type="FunCoup" id="Q9QZ85">
    <property type="interactions" value="60"/>
</dbReference>
<dbReference type="IntAct" id="Q9QZ85">
    <property type="interactions" value="2"/>
</dbReference>
<dbReference type="STRING" id="10090.ENSMUSP00000032473"/>
<dbReference type="GlyGen" id="Q9QZ85">
    <property type="glycosylation" value="1 site, 1 O-linked glycan (1 site)"/>
</dbReference>
<dbReference type="iPTMnet" id="Q9QZ85"/>
<dbReference type="MetOSite" id="Q9QZ85"/>
<dbReference type="PhosphoSitePlus" id="Q9QZ85"/>
<dbReference type="SwissPalm" id="Q9QZ85"/>
<dbReference type="jPOST" id="Q9QZ85"/>
<dbReference type="PaxDb" id="10090-ENSMUSP00000032473"/>
<dbReference type="ProteomicsDB" id="267305"/>
<dbReference type="DNASU" id="60440"/>
<dbReference type="Ensembl" id="ENSMUST00000032473.7">
    <property type="protein sequence ID" value="ENSMUSP00000032473.7"/>
    <property type="gene ID" value="ENSMUSG00000054072.13"/>
</dbReference>
<dbReference type="Ensembl" id="ENSMUST00000066912.13">
    <property type="protein sequence ID" value="ENSMUSP00000063390.6"/>
    <property type="gene ID" value="ENSMUSG00000054072.13"/>
</dbReference>
<dbReference type="Ensembl" id="ENSMUST00000237185.2">
    <property type="protein sequence ID" value="ENSMUSP00000157568.2"/>
    <property type="gene ID" value="ENSMUSG00000054072.13"/>
</dbReference>
<dbReference type="GeneID" id="60440"/>
<dbReference type="KEGG" id="mmu:60440"/>
<dbReference type="UCSC" id="uc008fac.2">
    <property type="organism name" value="mouse"/>
</dbReference>
<dbReference type="AGR" id="MGI:1926259"/>
<dbReference type="CTD" id="60440"/>
<dbReference type="MGI" id="MGI:1926259">
    <property type="gene designation" value="Iigp1"/>
</dbReference>
<dbReference type="VEuPathDB" id="HostDB:ENSMUSG00000054072"/>
<dbReference type="eggNOG" id="ENOG502QS9R">
    <property type="taxonomic scope" value="Eukaryota"/>
</dbReference>
<dbReference type="GeneTree" id="ENSGT00950000183007"/>
<dbReference type="HOGENOM" id="CLU_015342_2_0_1"/>
<dbReference type="InParanoid" id="Q9QZ85"/>
<dbReference type="OMA" id="WPTDEYV"/>
<dbReference type="PhylomeDB" id="Q9QZ85"/>
<dbReference type="TreeFam" id="TF331897"/>
<dbReference type="BioGRID-ORCS" id="60440">
    <property type="hits" value="4 hits in 75 CRISPR screens"/>
</dbReference>
<dbReference type="ChiTaRS" id="Iigp1">
    <property type="organism name" value="mouse"/>
</dbReference>
<dbReference type="EvolutionaryTrace" id="Q9QZ85"/>
<dbReference type="PRO" id="PR:Q9QZ85"/>
<dbReference type="Proteomes" id="UP000000589">
    <property type="component" value="Chromosome 18"/>
</dbReference>
<dbReference type="RNAct" id="Q9QZ85">
    <property type="molecule type" value="protein"/>
</dbReference>
<dbReference type="Bgee" id="ENSMUSG00000054072">
    <property type="expression patterns" value="Expressed in heart right ventricle and 195 other cell types or tissues"/>
</dbReference>
<dbReference type="ExpressionAtlas" id="Q9QZ85">
    <property type="expression patterns" value="baseline and differential"/>
</dbReference>
<dbReference type="GO" id="GO:0005737">
    <property type="term" value="C:cytoplasm"/>
    <property type="evidence" value="ECO:0000314"/>
    <property type="project" value="UniProtKB"/>
</dbReference>
<dbReference type="GO" id="GO:0005789">
    <property type="term" value="C:endoplasmic reticulum membrane"/>
    <property type="evidence" value="ECO:0000314"/>
    <property type="project" value="UniProtKB"/>
</dbReference>
<dbReference type="GO" id="GO:0032580">
    <property type="term" value="C:Golgi cisterna membrane"/>
    <property type="evidence" value="ECO:0007669"/>
    <property type="project" value="UniProtKB-SubCell"/>
</dbReference>
<dbReference type="GO" id="GO:0031965">
    <property type="term" value="C:nuclear membrane"/>
    <property type="evidence" value="ECO:0007669"/>
    <property type="project" value="UniProtKB-SubCell"/>
</dbReference>
<dbReference type="GO" id="GO:0020005">
    <property type="term" value="C:symbiont-containing vacuole membrane"/>
    <property type="evidence" value="ECO:0000314"/>
    <property type="project" value="UniProtKB"/>
</dbReference>
<dbReference type="GO" id="GO:0019003">
    <property type="term" value="F:GDP binding"/>
    <property type="evidence" value="ECO:0000314"/>
    <property type="project" value="UniProtKB"/>
</dbReference>
<dbReference type="GO" id="GO:0005525">
    <property type="term" value="F:GTP binding"/>
    <property type="evidence" value="ECO:0000314"/>
    <property type="project" value="UniProtKB"/>
</dbReference>
<dbReference type="GO" id="GO:0003924">
    <property type="term" value="F:GTPase activity"/>
    <property type="evidence" value="ECO:0000314"/>
    <property type="project" value="UniProtKB"/>
</dbReference>
<dbReference type="GO" id="GO:0042802">
    <property type="term" value="F:identical protein binding"/>
    <property type="evidence" value="ECO:0000314"/>
    <property type="project" value="MGI"/>
</dbReference>
<dbReference type="GO" id="GO:0035458">
    <property type="term" value="P:cellular response to interferon-beta"/>
    <property type="evidence" value="ECO:0000314"/>
    <property type="project" value="MGI"/>
</dbReference>
<dbReference type="GO" id="GO:0019221">
    <property type="term" value="P:cytokine-mediated signaling pathway"/>
    <property type="evidence" value="ECO:0000304"/>
    <property type="project" value="MGI"/>
</dbReference>
<dbReference type="GO" id="GO:0050829">
    <property type="term" value="P:defense response to Gram-negative bacterium"/>
    <property type="evidence" value="ECO:0000314"/>
    <property type="project" value="UniProtKB"/>
</dbReference>
<dbReference type="GO" id="GO:0042832">
    <property type="term" value="P:defense response to protozoan"/>
    <property type="evidence" value="ECO:0000314"/>
    <property type="project" value="UniProtKB"/>
</dbReference>
<dbReference type="GO" id="GO:0045087">
    <property type="term" value="P:innate immune response"/>
    <property type="evidence" value="ECO:0007669"/>
    <property type="project" value="UniProtKB-KW"/>
</dbReference>
<dbReference type="GO" id="GO:0010506">
    <property type="term" value="P:regulation of autophagy"/>
    <property type="evidence" value="ECO:0000315"/>
    <property type="project" value="UniProtKB"/>
</dbReference>
<dbReference type="GO" id="GO:0009617">
    <property type="term" value="P:response to bacterium"/>
    <property type="evidence" value="ECO:0000270"/>
    <property type="project" value="MGI"/>
</dbReference>
<dbReference type="CDD" id="cd04104">
    <property type="entry name" value="p47_IIGP_like"/>
    <property type="match status" value="1"/>
</dbReference>
<dbReference type="FunFam" id="3.40.50.300:FF:000541">
    <property type="entry name" value="Immunity related GTPase M"/>
    <property type="match status" value="1"/>
</dbReference>
<dbReference type="Gene3D" id="3.40.50.300">
    <property type="entry name" value="P-loop containing nucleotide triphosphate hydrolases"/>
    <property type="match status" value="1"/>
</dbReference>
<dbReference type="InterPro" id="IPR030385">
    <property type="entry name" value="G_IRG_dom"/>
</dbReference>
<dbReference type="InterPro" id="IPR007743">
    <property type="entry name" value="Immunity-related_GTPase-like"/>
</dbReference>
<dbReference type="InterPro" id="IPR051515">
    <property type="entry name" value="IRG"/>
</dbReference>
<dbReference type="InterPro" id="IPR027417">
    <property type="entry name" value="P-loop_NTPase"/>
</dbReference>
<dbReference type="PANTHER" id="PTHR32341:SF2">
    <property type="entry name" value="INTERFERON-GAMMA-INDUCIBLE GTPASE IFGGA2 PROTEIN-RELATED"/>
    <property type="match status" value="1"/>
</dbReference>
<dbReference type="PANTHER" id="PTHR32341">
    <property type="entry name" value="INTERFERON-INDUCIBLE GTPASE"/>
    <property type="match status" value="1"/>
</dbReference>
<dbReference type="Pfam" id="PF05049">
    <property type="entry name" value="IIGP"/>
    <property type="match status" value="1"/>
</dbReference>
<dbReference type="SUPFAM" id="SSF52540">
    <property type="entry name" value="P-loop containing nucleoside triphosphate hydrolases"/>
    <property type="match status" value="1"/>
</dbReference>
<dbReference type="PROSITE" id="PS51716">
    <property type="entry name" value="G_IRG"/>
    <property type="match status" value="1"/>
</dbReference>
<gene>
    <name type="primary">Iigp1</name>
    <name type="synonym">Irga6</name>
</gene>
<name>IIGP1_MOUSE</name>
<feature type="initiator methionine" description="Removed" evidence="18">
    <location>
        <position position="1"/>
    </location>
</feature>
<feature type="chain" id="PRO_0000223527" description="Interferon-inducible GTPase 1">
    <location>
        <begin position="2"/>
        <end position="413"/>
    </location>
</feature>
<feature type="domain" description="IRG-type G" evidence="1">
    <location>
        <begin position="68"/>
        <end position="250"/>
    </location>
</feature>
<feature type="binding site" evidence="3 16 19 20">
    <location>
        <position position="79"/>
    </location>
    <ligand>
        <name>GDP</name>
        <dbReference type="ChEBI" id="CHEBI:58189"/>
    </ligand>
</feature>
<feature type="binding site" evidence="3 16 19 20">
    <location>
        <position position="81"/>
    </location>
    <ligand>
        <name>GDP</name>
        <dbReference type="ChEBI" id="CHEBI:58189"/>
    </ligand>
</feature>
<feature type="binding site" evidence="3 16 19 20">
    <location>
        <position position="82"/>
    </location>
    <ligand>
        <name>GDP</name>
        <dbReference type="ChEBI" id="CHEBI:58189"/>
    </ligand>
</feature>
<feature type="binding site" evidence="3 16 19 20">
    <location>
        <position position="83"/>
    </location>
    <ligand>
        <name>GDP</name>
        <dbReference type="ChEBI" id="CHEBI:58189"/>
    </ligand>
</feature>
<feature type="binding site" evidence="16 19 20">
    <location>
        <position position="84"/>
    </location>
    <ligand>
        <name>GDP</name>
        <dbReference type="ChEBI" id="CHEBI:58189"/>
    </ligand>
</feature>
<feature type="binding site" evidence="16 19 20">
    <location>
        <position position="102"/>
    </location>
    <ligand>
        <name>GDP</name>
        <dbReference type="ChEBI" id="CHEBI:58189"/>
    </ligand>
</feature>
<feature type="binding site" evidence="3">
    <location>
        <position position="103"/>
    </location>
    <ligand>
        <name>GDP</name>
        <dbReference type="ChEBI" id="CHEBI:58189"/>
    </ligand>
</feature>
<feature type="binding site" evidence="3 16 19 20">
    <location>
        <position position="184"/>
    </location>
    <ligand>
        <name>GDP</name>
        <dbReference type="ChEBI" id="CHEBI:58189"/>
    </ligand>
</feature>
<feature type="binding site" evidence="3 16 19 20">
    <location>
        <position position="186"/>
    </location>
    <ligand>
        <name>GDP</name>
        <dbReference type="ChEBI" id="CHEBI:58189"/>
    </ligand>
</feature>
<feature type="binding site" evidence="16 19">
    <location>
        <position position="187"/>
    </location>
    <ligand>
        <name>GDP</name>
        <dbReference type="ChEBI" id="CHEBI:58189"/>
    </ligand>
</feature>
<feature type="binding site" evidence="3 16 19 20">
    <location>
        <position position="232"/>
    </location>
    <ligand>
        <name>GDP</name>
        <dbReference type="ChEBI" id="CHEBI:58189"/>
    </ligand>
</feature>
<feature type="modified residue" description="(Microbial infection) Phosphothreonine; by ROP18" evidence="11">
    <location>
        <position position="102"/>
    </location>
</feature>
<feature type="modified residue" description="(Microbial infection) Phosphothreonine; by ROP18" evidence="11">
    <location>
        <position position="108"/>
    </location>
</feature>
<feature type="lipid moiety-binding region" description="N-myristoyl glycine" evidence="18">
    <location>
        <position position="2"/>
    </location>
</feature>
<feature type="disulfide bond" evidence="16 19">
    <location>
        <begin position="236"/>
        <end position="410"/>
    </location>
</feature>
<feature type="mutagenesis site" description="Protein is detected exclusively in the aqueous phase." evidence="5">
    <original>G</original>
    <variation>A</variation>
    <location>
        <position position="2"/>
    </location>
</feature>
<feature type="mutagenesis site" description="Constitutively active. Binds GTP but fails to hydrolyze it. Does not localize to the parasitophorous vacuole membrane following T.gondii infection." evidence="6 7">
    <original>K</original>
    <variation>A</variation>
    <location>
        <position position="82"/>
    </location>
</feature>
<feature type="mutagenesis site" description="Abrogates interaction with HOOK3. Greatly reduces binding affinity for GDP and GTP. Abolishes GTP-dependent oligomer formation." evidence="4 7">
    <original>S</original>
    <variation>N</variation>
    <location>
        <position position="83"/>
    </location>
</feature>
<feature type="mutagenesis site" description="Abolishes interaction with T.gondii GRA7. Abolishes GTPase activity. Reduces GTP-dependent oligomerization." evidence="11 15">
    <original>T</original>
    <variation>A</variation>
    <location>
        <position position="102"/>
    </location>
</feature>
<feature type="mutagenesis site" description="Abolishes GTPase activity. Reduces GTP-dependent oligomerization. Results in inefficient accumulation of protein at parasitophorous vacuole following infection with avirulent T.gondii strain; reduces accumulation of wild-type protein." evidence="11">
    <original>T</original>
    <variation>D</variation>
    <location>
        <position position="102"/>
    </location>
</feature>
<feature type="mutagenesis site" description="Abolishes interaction with T.gondii GRA7. Abolishes GTPase activity. Reduces GTP-dependent oligomerization." evidence="11 15">
    <original>T</original>
    <variation>A</variation>
    <location>
        <position position="108"/>
    </location>
</feature>
<feature type="mutagenesis site" description="Abolishes GTPase activity. Reduces GTP-dependent oligomerization. Results in inefficient accumulation of protein at parasitophorous vacuole following infection with avirulent T.gondii strain; reduces accumulation of wild-type protein." evidence="11">
    <original>T</original>
    <variation>D</variation>
    <location>
        <position position="108"/>
    </location>
</feature>
<feature type="mutagenesis site" description="Blocks T.gondii ROP5 binding." evidence="13">
    <original>K</original>
    <variation>E</variation>
    <location>
        <position position="161"/>
    </location>
</feature>
<feature type="mutagenesis site" description="Blocks T.gondii ROP5 binding." evidence="13">
    <original>K</original>
    <variation>E</variation>
    <location>
        <position position="162"/>
    </location>
</feature>
<feature type="mutagenesis site" description="Blocks T.gondii ROP5 binding." evidence="13">
    <original>D</original>
    <variation>A</variation>
    <location>
        <position position="164"/>
    </location>
</feature>
<feature type="mutagenesis site" description="Blocks T.gondii ROP5 binding." evidence="13">
    <original>K</original>
    <variation>D</variation>
    <location>
        <position position="196"/>
    </location>
</feature>
<feature type="mutagenesis site" description="Blocks T.gondii ROP5 binding." evidence="13">
    <original>P</original>
    <variation>H</variation>
    <location>
        <position position="197"/>
    </location>
</feature>
<feature type="mutagenesis site" description="Blocks T.gondii ROP5 binding." evidence="13">
    <original>N</original>
    <variation>R</variation>
    <location>
        <position position="212"/>
    </location>
</feature>
<feature type="mutagenesis site" description="Blocks T.gondii ROP5 binding." evidence="13">
    <original>C</original>
    <variation>R</variation>
    <location>
        <position position="213"/>
    </location>
</feature>
<feature type="sequence conflict" description="In Ref. 2; AAF07195." evidence="18" ref="2">
    <original>N</original>
    <variation>D</variation>
    <location>
        <position position="138"/>
    </location>
</feature>
<feature type="helix" evidence="25">
    <location>
        <begin position="16"/>
        <end position="25"/>
    </location>
</feature>
<feature type="helix" evidence="23">
    <location>
        <begin position="29"/>
        <end position="31"/>
    </location>
</feature>
<feature type="helix" evidence="25">
    <location>
        <begin position="36"/>
        <end position="47"/>
    </location>
</feature>
<feature type="helix" evidence="25">
    <location>
        <begin position="51"/>
        <end position="66"/>
    </location>
</feature>
<feature type="strand" evidence="25">
    <location>
        <begin position="70"/>
        <end position="75"/>
    </location>
</feature>
<feature type="helix" evidence="25">
    <location>
        <begin position="82"/>
        <end position="90"/>
    </location>
</feature>
<feature type="strand" evidence="21">
    <location>
        <begin position="94"/>
        <end position="96"/>
    </location>
</feature>
<feature type="helix" evidence="25">
    <location>
        <begin position="104"/>
        <end position="108"/>
    </location>
</feature>
<feature type="strand" evidence="25">
    <location>
        <begin position="112"/>
        <end position="115"/>
    </location>
</feature>
<feature type="strand" evidence="25">
    <location>
        <begin position="122"/>
        <end position="126"/>
    </location>
</feature>
<feature type="helix" evidence="25">
    <location>
        <begin position="130"/>
        <end position="132"/>
    </location>
</feature>
<feature type="helix" evidence="25">
    <location>
        <begin position="137"/>
        <end position="143"/>
    </location>
</feature>
<feature type="helix" evidence="25">
    <location>
        <begin position="146"/>
        <end position="148"/>
    </location>
</feature>
<feature type="strand" evidence="25">
    <location>
        <begin position="150"/>
        <end position="159"/>
    </location>
</feature>
<feature type="helix" evidence="25">
    <location>
        <begin position="162"/>
        <end position="173"/>
    </location>
</feature>
<feature type="strand" evidence="25">
    <location>
        <begin position="179"/>
        <end position="183"/>
    </location>
</feature>
<feature type="helix" evidence="25">
    <location>
        <begin position="185"/>
        <end position="195"/>
    </location>
</feature>
<feature type="turn" evidence="25">
    <location>
        <begin position="197"/>
        <end position="199"/>
    </location>
</feature>
<feature type="helix" evidence="25">
    <location>
        <begin position="202"/>
        <end position="219"/>
    </location>
</feature>
<feature type="strand" evidence="26">
    <location>
        <begin position="221"/>
        <end position="223"/>
    </location>
</feature>
<feature type="strand" evidence="25">
    <location>
        <begin position="227"/>
        <end position="229"/>
    </location>
</feature>
<feature type="turn" evidence="24">
    <location>
        <begin position="233"/>
        <end position="236"/>
    </location>
</feature>
<feature type="strand" evidence="22">
    <location>
        <begin position="237"/>
        <end position="239"/>
    </location>
</feature>
<feature type="helix" evidence="25">
    <location>
        <begin position="240"/>
        <end position="249"/>
    </location>
</feature>
<feature type="helix" evidence="25">
    <location>
        <begin position="253"/>
        <end position="255"/>
    </location>
</feature>
<feature type="helix" evidence="25">
    <location>
        <begin position="256"/>
        <end position="262"/>
    </location>
</feature>
<feature type="helix" evidence="25">
    <location>
        <begin position="268"/>
        <end position="288"/>
    </location>
</feature>
<feature type="strand" evidence="25">
    <location>
        <begin position="292"/>
        <end position="294"/>
    </location>
</feature>
<feature type="helix" evidence="25">
    <location>
        <begin position="296"/>
        <end position="298"/>
    </location>
</feature>
<feature type="helix" evidence="25">
    <location>
        <begin position="303"/>
        <end position="319"/>
    </location>
</feature>
<feature type="helix" evidence="25">
    <location>
        <begin position="324"/>
        <end position="333"/>
    </location>
</feature>
<feature type="helix" evidence="25">
    <location>
        <begin position="338"/>
        <end position="342"/>
    </location>
</feature>
<feature type="helix" evidence="25">
    <location>
        <begin position="347"/>
        <end position="349"/>
    </location>
</feature>
<feature type="strand" evidence="22">
    <location>
        <begin position="355"/>
        <end position="357"/>
    </location>
</feature>
<feature type="helix" evidence="25">
    <location>
        <begin position="359"/>
        <end position="374"/>
    </location>
</feature>
<feature type="strand" evidence="25">
    <location>
        <begin position="377"/>
        <end position="379"/>
    </location>
</feature>
<feature type="helix" evidence="25">
    <location>
        <begin position="386"/>
        <end position="409"/>
    </location>
</feature>
<accession>Q9QZ85</accession>
<accession>Q9Z1M3</accession>
<keyword id="KW-0002">3D-structure</keyword>
<keyword id="KW-0963">Cytoplasm</keyword>
<keyword id="KW-1015">Disulfide bond</keyword>
<keyword id="KW-0256">Endoplasmic reticulum</keyword>
<keyword id="KW-0333">Golgi apparatus</keyword>
<keyword id="KW-0342">GTP-binding</keyword>
<keyword id="KW-0378">Hydrolase</keyword>
<keyword id="KW-0391">Immunity</keyword>
<keyword id="KW-0399">Innate immunity</keyword>
<keyword id="KW-0449">Lipoprotein</keyword>
<keyword id="KW-0472">Membrane</keyword>
<keyword id="KW-0519">Myristate</keyword>
<keyword id="KW-0547">Nucleotide-binding</keyword>
<keyword id="KW-0539">Nucleus</keyword>
<keyword id="KW-0597">Phosphoprotein</keyword>
<keyword id="KW-1185">Reference proteome</keyword>
<evidence type="ECO:0000255" key="1">
    <source>
        <dbReference type="PROSITE-ProRule" id="PRU01053"/>
    </source>
</evidence>
<evidence type="ECO:0000269" key="2">
    <source>
    </source>
</evidence>
<evidence type="ECO:0000269" key="3">
    <source>
    </source>
</evidence>
<evidence type="ECO:0000269" key="4">
    <source>
    </source>
</evidence>
<evidence type="ECO:0000269" key="5">
    <source>
    </source>
</evidence>
<evidence type="ECO:0000269" key="6">
    <source>
    </source>
</evidence>
<evidence type="ECO:0000269" key="7">
    <source>
    </source>
</evidence>
<evidence type="ECO:0000269" key="8">
    <source>
    </source>
</evidence>
<evidence type="ECO:0000269" key="9">
    <source>
    </source>
</evidence>
<evidence type="ECO:0000269" key="10">
    <source>
    </source>
</evidence>
<evidence type="ECO:0000269" key="11">
    <source>
    </source>
</evidence>
<evidence type="ECO:0000269" key="12">
    <source>
    </source>
</evidence>
<evidence type="ECO:0000269" key="13">
    <source>
    </source>
</evidence>
<evidence type="ECO:0000269" key="14">
    <source>
    </source>
</evidence>
<evidence type="ECO:0000269" key="15">
    <source>
    </source>
</evidence>
<evidence type="ECO:0000269" key="16">
    <source>
    </source>
</evidence>
<evidence type="ECO:0000269" key="17">
    <source>
    </source>
</evidence>
<evidence type="ECO:0000305" key="18"/>
<evidence type="ECO:0007744" key="19">
    <source>
        <dbReference type="PDB" id="4LV5"/>
    </source>
</evidence>
<evidence type="ECO:0007744" key="20">
    <source>
        <dbReference type="PDB" id="4LV8"/>
    </source>
</evidence>
<evidence type="ECO:0007829" key="21">
    <source>
        <dbReference type="PDB" id="1TPZ"/>
    </source>
</evidence>
<evidence type="ECO:0007829" key="22">
    <source>
        <dbReference type="PDB" id="1TQ2"/>
    </source>
</evidence>
<evidence type="ECO:0007829" key="23">
    <source>
        <dbReference type="PDB" id="1TQ4"/>
    </source>
</evidence>
<evidence type="ECO:0007829" key="24">
    <source>
        <dbReference type="PDB" id="1TQD"/>
    </source>
</evidence>
<evidence type="ECO:0007829" key="25">
    <source>
        <dbReference type="PDB" id="4LV5"/>
    </source>
</evidence>
<evidence type="ECO:0007829" key="26">
    <source>
        <dbReference type="PDB" id="5FPH"/>
    </source>
</evidence>
<comment type="function">
    <text evidence="2 3 6 9 11 13 14 15">GTPase with low activity (PubMed:12732635). Has higher affinity for GDP than for GTP (PubMed:12732635). Plays a role in resistance to intracellular pathogens (PubMed:11907101). During infection with avirulent Toxoplasma gondii strains, recruited to the parasitophorous vacuole membrane (PubMed:24324375, PubMed:24390541, PubMed:22802726, PubMed:21203588). Required for disruption of the parasitophorous vacuole formed following T.gondii infection and subsequent killing of the parasite (PubMed:16304607). Mediates resistance to Chlamydia trachomatis infection by targeting bacterial inclusions to autophagosomes for subsequent lysosomal destruction (PubMed:19242543).</text>
</comment>
<comment type="catalytic activity">
    <reaction evidence="3 11 15 16">
        <text>GTP + H2O = GDP + phosphate + H(+)</text>
        <dbReference type="Rhea" id="RHEA:19669"/>
        <dbReference type="ChEBI" id="CHEBI:15377"/>
        <dbReference type="ChEBI" id="CHEBI:15378"/>
        <dbReference type="ChEBI" id="CHEBI:37565"/>
        <dbReference type="ChEBI" id="CHEBI:43474"/>
        <dbReference type="ChEBI" id="CHEBI:58189"/>
    </reaction>
</comment>
<comment type="subunit">
    <text evidence="3 4 8 11 12 15">Monomer, as apoenzyme and in the GDP-bound form. Homooligomer, upon GTP binding (PubMed:12732635, PubMed:18784077, PubMed:24390541, PubMed:22761577, PubMed:21203588). Interacts with HOOK3 (PubMed:15075236).</text>
</comment>
<comment type="subunit">
    <text evidence="12 13 15 16">(Microbial infection) Interacts with Toxoplasma gondii GRA7 in GTP-dependent manner; the interaction results in faster turnover of the GTP-activated IIGP1 oligomer (PubMed:24390541). Interacts with T.gondii ROP5; the interaction results in inhibition of IRGA6/IIGP1 GTPase activity and oligomerization (PubMed:22761577, PubMed:22802726, PubMed:25118287).</text>
</comment>
<comment type="interaction">
    <interactant intactId="EBI-6910173">
        <id>Q9QZ85</id>
    </interactant>
    <interactant intactId="EBI-6910173">
        <id>Q9QZ85</id>
        <label>Iigp1</label>
    </interactant>
    <organismsDiffer>false</organismsDiffer>
    <experiments>2</experiments>
</comment>
<comment type="interaction">
    <interactant intactId="EBI-6910173">
        <id>Q9QZ85</id>
    </interactant>
    <interactant intactId="EBI-15902261">
        <id>A1E140</id>
        <label>ROP18</label>
    </interactant>
    <organismsDiffer>true</organismsDiffer>
    <experiments>3</experiments>
</comment>
<comment type="subcellular location">
    <subcellularLocation>
        <location>Cytoplasm</location>
    </subcellularLocation>
    <subcellularLocation>
        <location>Nucleus membrane</location>
        <topology>Peripheral membrane protein</topology>
    </subcellularLocation>
    <subcellularLocation>
        <location>Endoplasmic reticulum membrane</location>
        <topology>Peripheral membrane protein</topology>
    </subcellularLocation>
    <subcellularLocation>
        <location>Golgi apparatus</location>
        <location>Golgi stack membrane</location>
        <topology>Peripheral membrane protein</topology>
    </subcellularLocation>
    <subcellularLocation>
        <location>Parasitophorous vacuole membrane</location>
    </subcellularLocation>
    <text>Localizes to the bacterial inclusions formed following C.trachomatis infection. Accumulates in a GTP-bound form on the parasitophorous vacuole membranes formed following T.gondii infection but exists in a GDP-bound form in uninfected cells.</text>
</comment>
<comment type="subcellular location">
    <subcellularLocation>
        <location>Parasitophorous vacuole membrane</location>
        <topology evidence="14 15">Peripheral membrane protein</topology>
    </subcellularLocation>
    <text>(Microbial infection).</text>
</comment>
<comment type="induction">
    <text evidence="2 17">Up-regulated by IFNG, IFNA1 and lipopolysaccharide (LPS) within 20 hours. Transiently up-regulated during the early stages of infection by Listeria monocytogenes. After 6 days expression is back to basal levels.</text>
</comment>
<comment type="PTM">
    <text evidence="11">Myristoylated.</text>
</comment>
<comment type="PTM">
    <text evidence="10 11 13">(Microbial infection) Phosphorylated by Toxoplasma gondii ROP18 from virulent strains.</text>
</comment>
<comment type="similarity">
    <text evidence="1 18">Belongs to the TRAFAC class dynamin-like GTPase superfamily. IRG family.</text>
</comment>
<reference key="1">
    <citation type="journal article" date="1998" name="J. Immunol.">
        <title>Two families of GTPases dominate the complex cellular response to IFN-gamma.</title>
        <authorList>
            <person name="Boehm U."/>
            <person name="Guethlein L."/>
            <person name="Klamp T."/>
            <person name="Ozbek K."/>
            <person name="Schaub A."/>
            <person name="Fuetterer A."/>
            <person name="Pfeffer K."/>
            <person name="Howard J.C."/>
        </authorList>
    </citation>
    <scope>NUCLEOTIDE SEQUENCE [MRNA]</scope>
    <scope>INDUCTION</scope>
    <source>
        <strain>C57BL/6J</strain>
        <tissue>Embryonic fibroblast</tissue>
        <tissue>Macrophage</tissue>
    </source>
</reference>
<reference key="2">
    <citation type="journal article" date="2002" name="J. Immunol.">
        <title>The IFN-inducible Golgi- and endoplasmic reticulum- associated 47-kDa GTPase IIGP is transiently expressed during listeriosis.</title>
        <authorList>
            <person name="Zerrahn J."/>
            <person name="Schaible U.E."/>
            <person name="Brinkmann V."/>
            <person name="Guhlich U."/>
            <person name="Kaufmann S.H.E."/>
        </authorList>
    </citation>
    <scope>NUCLEOTIDE SEQUENCE [MRNA]</scope>
    <scope>FUNCTION</scope>
    <scope>INDUCTION</scope>
    <scope>SUBCELLULAR LOCATION</scope>
    <source>
        <strain>C57BL/6J</strain>
        <tissue>Splenocyte</tissue>
    </source>
</reference>
<reference key="3">
    <citation type="journal article" date="2005" name="Science">
        <title>The transcriptional landscape of the mammalian genome.</title>
        <authorList>
            <person name="Carninci P."/>
            <person name="Kasukawa T."/>
            <person name="Katayama S."/>
            <person name="Gough J."/>
            <person name="Frith M.C."/>
            <person name="Maeda N."/>
            <person name="Oyama R."/>
            <person name="Ravasi T."/>
            <person name="Lenhard B."/>
            <person name="Wells C."/>
            <person name="Kodzius R."/>
            <person name="Shimokawa K."/>
            <person name="Bajic V.B."/>
            <person name="Brenner S.E."/>
            <person name="Batalov S."/>
            <person name="Forrest A.R."/>
            <person name="Zavolan M."/>
            <person name="Davis M.J."/>
            <person name="Wilming L.G."/>
            <person name="Aidinis V."/>
            <person name="Allen J.E."/>
            <person name="Ambesi-Impiombato A."/>
            <person name="Apweiler R."/>
            <person name="Aturaliya R.N."/>
            <person name="Bailey T.L."/>
            <person name="Bansal M."/>
            <person name="Baxter L."/>
            <person name="Beisel K.W."/>
            <person name="Bersano T."/>
            <person name="Bono H."/>
            <person name="Chalk A.M."/>
            <person name="Chiu K.P."/>
            <person name="Choudhary V."/>
            <person name="Christoffels A."/>
            <person name="Clutterbuck D.R."/>
            <person name="Crowe M.L."/>
            <person name="Dalla E."/>
            <person name="Dalrymple B.P."/>
            <person name="de Bono B."/>
            <person name="Della Gatta G."/>
            <person name="di Bernardo D."/>
            <person name="Down T."/>
            <person name="Engstrom P."/>
            <person name="Fagiolini M."/>
            <person name="Faulkner G."/>
            <person name="Fletcher C.F."/>
            <person name="Fukushima T."/>
            <person name="Furuno M."/>
            <person name="Futaki S."/>
            <person name="Gariboldi M."/>
            <person name="Georgii-Hemming P."/>
            <person name="Gingeras T.R."/>
            <person name="Gojobori T."/>
            <person name="Green R.E."/>
            <person name="Gustincich S."/>
            <person name="Harbers M."/>
            <person name="Hayashi Y."/>
            <person name="Hensch T.K."/>
            <person name="Hirokawa N."/>
            <person name="Hill D."/>
            <person name="Huminiecki L."/>
            <person name="Iacono M."/>
            <person name="Ikeo K."/>
            <person name="Iwama A."/>
            <person name="Ishikawa T."/>
            <person name="Jakt M."/>
            <person name="Kanapin A."/>
            <person name="Katoh M."/>
            <person name="Kawasawa Y."/>
            <person name="Kelso J."/>
            <person name="Kitamura H."/>
            <person name="Kitano H."/>
            <person name="Kollias G."/>
            <person name="Krishnan S.P."/>
            <person name="Kruger A."/>
            <person name="Kummerfeld S.K."/>
            <person name="Kurochkin I.V."/>
            <person name="Lareau L.F."/>
            <person name="Lazarevic D."/>
            <person name="Lipovich L."/>
            <person name="Liu J."/>
            <person name="Liuni S."/>
            <person name="McWilliam S."/>
            <person name="Madan Babu M."/>
            <person name="Madera M."/>
            <person name="Marchionni L."/>
            <person name="Matsuda H."/>
            <person name="Matsuzawa S."/>
            <person name="Miki H."/>
            <person name="Mignone F."/>
            <person name="Miyake S."/>
            <person name="Morris K."/>
            <person name="Mottagui-Tabar S."/>
            <person name="Mulder N."/>
            <person name="Nakano N."/>
            <person name="Nakauchi H."/>
            <person name="Ng P."/>
            <person name="Nilsson R."/>
            <person name="Nishiguchi S."/>
            <person name="Nishikawa S."/>
            <person name="Nori F."/>
            <person name="Ohara O."/>
            <person name="Okazaki Y."/>
            <person name="Orlando V."/>
            <person name="Pang K.C."/>
            <person name="Pavan W.J."/>
            <person name="Pavesi G."/>
            <person name="Pesole G."/>
            <person name="Petrovsky N."/>
            <person name="Piazza S."/>
            <person name="Reed J."/>
            <person name="Reid J.F."/>
            <person name="Ring B.Z."/>
            <person name="Ringwald M."/>
            <person name="Rost B."/>
            <person name="Ruan Y."/>
            <person name="Salzberg S.L."/>
            <person name="Sandelin A."/>
            <person name="Schneider C."/>
            <person name="Schoenbach C."/>
            <person name="Sekiguchi K."/>
            <person name="Semple C.A."/>
            <person name="Seno S."/>
            <person name="Sessa L."/>
            <person name="Sheng Y."/>
            <person name="Shibata Y."/>
            <person name="Shimada H."/>
            <person name="Shimada K."/>
            <person name="Silva D."/>
            <person name="Sinclair B."/>
            <person name="Sperling S."/>
            <person name="Stupka E."/>
            <person name="Sugiura K."/>
            <person name="Sultana R."/>
            <person name="Takenaka Y."/>
            <person name="Taki K."/>
            <person name="Tammoja K."/>
            <person name="Tan S.L."/>
            <person name="Tang S."/>
            <person name="Taylor M.S."/>
            <person name="Tegner J."/>
            <person name="Teichmann S.A."/>
            <person name="Ueda H.R."/>
            <person name="van Nimwegen E."/>
            <person name="Verardo R."/>
            <person name="Wei C.L."/>
            <person name="Yagi K."/>
            <person name="Yamanishi H."/>
            <person name="Zabarovsky E."/>
            <person name="Zhu S."/>
            <person name="Zimmer A."/>
            <person name="Hide W."/>
            <person name="Bult C."/>
            <person name="Grimmond S.M."/>
            <person name="Teasdale R.D."/>
            <person name="Liu E.T."/>
            <person name="Brusic V."/>
            <person name="Quackenbush J."/>
            <person name="Wahlestedt C."/>
            <person name="Mattick J.S."/>
            <person name="Hume D.A."/>
            <person name="Kai C."/>
            <person name="Sasaki D."/>
            <person name="Tomaru Y."/>
            <person name="Fukuda S."/>
            <person name="Kanamori-Katayama M."/>
            <person name="Suzuki M."/>
            <person name="Aoki J."/>
            <person name="Arakawa T."/>
            <person name="Iida J."/>
            <person name="Imamura K."/>
            <person name="Itoh M."/>
            <person name="Kato T."/>
            <person name="Kawaji H."/>
            <person name="Kawagashira N."/>
            <person name="Kawashima T."/>
            <person name="Kojima M."/>
            <person name="Kondo S."/>
            <person name="Konno H."/>
            <person name="Nakano K."/>
            <person name="Ninomiya N."/>
            <person name="Nishio T."/>
            <person name="Okada M."/>
            <person name="Plessy C."/>
            <person name="Shibata K."/>
            <person name="Shiraki T."/>
            <person name="Suzuki S."/>
            <person name="Tagami M."/>
            <person name="Waki K."/>
            <person name="Watahiki A."/>
            <person name="Okamura-Oho Y."/>
            <person name="Suzuki H."/>
            <person name="Kawai J."/>
            <person name="Hayashizaki Y."/>
        </authorList>
    </citation>
    <scope>NUCLEOTIDE SEQUENCE [LARGE SCALE MRNA]</scope>
    <source>
        <strain>C57BL/6J</strain>
    </source>
</reference>
<reference key="4">
    <citation type="submission" date="2005-07" db="EMBL/GenBank/DDBJ databases">
        <title>Cloning of mouse full open reading frames in Gateway(R) system entry vector (pDONR201).</title>
        <authorList>
            <person name="Ebert L."/>
            <person name="Muenstermann E."/>
            <person name="Schatten R."/>
            <person name="Henze S."/>
            <person name="Bohn E."/>
            <person name="Mollenhauer J."/>
            <person name="Wiemann S."/>
            <person name="Schick M."/>
            <person name="Korn B."/>
        </authorList>
    </citation>
    <scope>NUCLEOTIDE SEQUENCE [LARGE SCALE MRNA]</scope>
</reference>
<reference key="5">
    <citation type="journal article" date="2004" name="Genome Res.">
        <title>The status, quality, and expansion of the NIH full-length cDNA project: the Mammalian Gene Collection (MGC).</title>
        <authorList>
            <consortium name="The MGC Project Team"/>
        </authorList>
    </citation>
    <scope>NUCLEOTIDE SEQUENCE [LARGE SCALE MRNA]</scope>
    <source>
        <strain>FVB/N</strain>
        <tissue>Mammary tumor</tissue>
    </source>
</reference>
<reference key="6">
    <citation type="journal article" date="2004" name="J. Cell Sci.">
        <title>IIGP, a member of the IFN inducible and microbial defense mediating 47 kDa GTPase family, interacts with the microtubule binding protein hook3.</title>
        <authorList>
            <person name="Kaiser F."/>
            <person name="Kaufmann S.H.E."/>
            <person name="Zerrahn J."/>
        </authorList>
    </citation>
    <scope>INTERACTION WITH HOOK3</scope>
    <scope>SUBCELLULAR LOCATION</scope>
    <scope>MUTAGENESIS OF SER-83</scope>
</reference>
<reference key="7">
    <citation type="journal article" date="2004" name="J. Immunol.">
        <title>Mechanisms regulating the positioning of mouse p47 resistance GTPases LRG-47 and IIGP1 on cellular membranes: retargeting to plasma membrane induced by phagocytosis.</title>
        <authorList>
            <person name="Martens S."/>
            <person name="Sabel K."/>
            <person name="Lange R."/>
            <person name="Uthaiah R."/>
            <person name="Wolf E."/>
            <person name="Howard J.C."/>
        </authorList>
    </citation>
    <scope>SUBCELLULAR LOCATION</scope>
    <scope>PROBABLE MYRISTOYLATION AT GLY-2</scope>
    <scope>MUTAGENESIS OF GLY-2</scope>
    <source>
        <strain>C57BL/6J</strain>
    </source>
</reference>
<reference key="8">
    <citation type="journal article" date="2005" name="PLoS Pathog.">
        <title>Disruption of Toxoplasma gondii parasitophorous vacuoles by the mouse p47-resistance GTPases.</title>
        <authorList>
            <person name="Martens S."/>
            <person name="Parvanova I."/>
            <person name="Zerrahn J."/>
            <person name="Griffiths G."/>
            <person name="Schell G."/>
            <person name="Reichmann G."/>
            <person name="Howard J.C."/>
        </authorList>
    </citation>
    <scope>FUNCTION</scope>
    <scope>SUBCELLULAR LOCATION</scope>
    <scope>MUTAGENESIS OF LYS-82</scope>
    <source>
        <strain>C57BL/6J</strain>
    </source>
</reference>
<reference key="9">
    <citation type="journal article" date="2008" name="EMBO J.">
        <title>Regulatory interactions between IRG resistance GTPases in the cellular response to Toxoplasma gondii.</title>
        <authorList>
            <person name="Hunn J.P."/>
            <person name="Koenen-Waisman S."/>
            <person name="Papic N."/>
            <person name="Schroeder N."/>
            <person name="Pawlowski N."/>
            <person name="Lange R."/>
            <person name="Kaiser F."/>
            <person name="Zerrahn J."/>
            <person name="Martens S."/>
            <person name="Howard J.C."/>
        </authorList>
    </citation>
    <scope>SUBCELLULAR LOCATION</scope>
    <scope>MUTAGENESIS OF LYS-82 AND SER-83</scope>
    <source>
        <strain>C57BL/6J</strain>
    </source>
</reference>
<reference key="10">
    <citation type="journal article" date="2008" name="J. Biol. Chem.">
        <title>Inactive and active states of the interferon-inducible resistance GTPase, Irga6, in vivo.</title>
        <authorList>
            <person name="Papic N."/>
            <person name="Hunn J.P."/>
            <person name="Pawlowski N."/>
            <person name="Zerrahn J."/>
            <person name="Howard J.C."/>
        </authorList>
    </citation>
    <scope>SUBUNIT</scope>
    <scope>SUBCELLULAR LOCATION</scope>
</reference>
<reference key="11">
    <citation type="journal article" date="2009" name="PLoS ONE">
        <title>IFN-gamma-inducible Irga6 mediates host resistance against Chlamydia trachomatis via autophagy.</title>
        <authorList>
            <person name="Al-Zeer M.A."/>
            <person name="Al-Younes H.M."/>
            <person name="Braun P.R."/>
            <person name="Zerrahn J."/>
            <person name="Meyer T.F."/>
        </authorList>
    </citation>
    <scope>FUNCTION</scope>
    <scope>SUBCELLULAR LOCATION</scope>
</reference>
<reference key="12">
    <citation type="journal article" date="2010" name="Cell">
        <title>A tissue-specific atlas of mouse protein phosphorylation and expression.</title>
        <authorList>
            <person name="Huttlin E.L."/>
            <person name="Jedrychowski M.P."/>
            <person name="Elias J.E."/>
            <person name="Goswami T."/>
            <person name="Rad R."/>
            <person name="Beausoleil S.A."/>
            <person name="Villen J."/>
            <person name="Haas W."/>
            <person name="Sowa M.E."/>
            <person name="Gygi S.P."/>
        </authorList>
    </citation>
    <scope>IDENTIFICATION BY MASS SPECTROMETRY [LARGE SCALE ANALYSIS]</scope>
    <source>
        <tissue>Brown adipose tissue</tissue>
        <tissue>Heart</tissue>
        <tissue>Kidney</tissue>
        <tissue>Liver</tissue>
        <tissue>Lung</tissue>
        <tissue>Pancreas</tissue>
        <tissue>Spleen</tissue>
    </source>
</reference>
<reference evidence="18" key="13">
    <citation type="journal article" date="2010" name="Cell Host Microbe">
        <title>Phosphorylation of immunity-related GTPases by a Toxoplasma gondii-secreted kinase promotes macrophage survival and virulence.</title>
        <authorList>
            <person name="Fentress S.J."/>
            <person name="Behnke M.S."/>
            <person name="Dunay I.R."/>
            <person name="Mashayekhi M."/>
            <person name="Rommereim L.M."/>
            <person name="Fox B.A."/>
            <person name="Bzik D.J."/>
            <person name="Taylor G.A."/>
            <person name="Turk B.E."/>
            <person name="Lichti C.F."/>
            <person name="Townsend R.R."/>
            <person name="Qiu W."/>
            <person name="Hui R."/>
            <person name="Beatty W.L."/>
            <person name="Sibley L.D."/>
        </authorList>
    </citation>
    <scope>PHOSPHORYLATION (MICROBIAL INFECTION)</scope>
</reference>
<reference key="14">
    <citation type="journal article" date="2010" name="PLoS Biol.">
        <title>Phosphorylation of mouse immunity-related GTPase (IRG) resistance proteins is an evasion strategy for virulent Toxoplasma gondii.</title>
        <authorList>
            <person name="Steinfeldt T."/>
            <person name="Koenen-Waisman S."/>
            <person name="Tong L."/>
            <person name="Pawlowski N."/>
            <person name="Lamkemeyer T."/>
            <person name="Sibley L.D."/>
            <person name="Hunn J.P."/>
            <person name="Howard J.C."/>
        </authorList>
    </citation>
    <scope>IDENTIFICATION BY MASS SPECTROMETRY</scope>
    <scope>FUNCTION</scope>
    <scope>CATALYTIC ACTIVITY</scope>
    <scope>SUBUNIT</scope>
    <scope>MYRISTOYLATION</scope>
    <scope>PHOSPHORYLATION AT THR-102 AND THR-108 (MICROBIAL INFECTION)</scope>
    <scope>MUTAGENESIS OF THR-102 AND THR-108</scope>
</reference>
<reference key="15">
    <citation type="journal article" date="2015" name="PLoS Biol.">
        <authorList>
            <person name="Steinfeldt T."/>
            <person name="Koenen-Waisman S."/>
            <person name="Tong L."/>
            <person name="Pawlowski N."/>
            <person name="Lamkemeyer T."/>
            <person name="Sibley L.D."/>
            <person name="Hunn J.P."/>
            <person name="Howard J.C."/>
        </authorList>
    </citation>
    <scope>ERRATUM OF PUBMED:21203588</scope>
</reference>
<reference key="16">
    <citation type="journal article" date="2012" name="PLoS Biol.">
        <title>A Toxoplasma gondii pseudokinase inhibits host IRG resistance proteins.</title>
        <authorList>
            <person name="Fleckenstein M.C."/>
            <person name="Reese M.L."/>
            <person name="Koenen-Waisman S."/>
            <person name="Boothroyd J.C."/>
            <person name="Howard J.C."/>
            <person name="Steinfeldt T."/>
        </authorList>
    </citation>
    <scope>FUNCTION</scope>
    <scope>INTERACTION WITH TOXOPLASMA ROP5 (MICROBIAL INFECTION)</scope>
    <scope>PHOSPHORYLATION (MICROBIAL INFECTION)</scope>
    <scope>MUTAGENESIS OF LYS-161; LYS-162; ASP-164; LYS-196; PRO-197; ASN-212 AND CYS-213</scope>
</reference>
<reference key="17">
    <citation type="journal article" date="2012" name="PLoS Pathog.">
        <title>The rhoptry proteins ROP18 and ROP5 mediate Toxoplasma gondii evasion of the murine, but not the human, interferon-gamma response.</title>
        <authorList>
            <person name="Niedelman W."/>
            <person name="Gold D.A."/>
            <person name="Rosowski E.E."/>
            <person name="Sprokholt J.K."/>
            <person name="Lim D."/>
            <person name="Farid Arenas A."/>
            <person name="Melo M.B."/>
            <person name="Spooner E."/>
            <person name="Yaffe M.B."/>
            <person name="Saeij J.P."/>
        </authorList>
    </citation>
    <scope>SUBUNIT</scope>
    <scope>INTERACTION WITH TOXOPLASMA ROP5 (MICROBIAL INFECTION)</scope>
</reference>
<reference key="18">
    <citation type="journal article" date="2013" name="ScientificWorldJournal">
        <title>In astrocytes the accumulation of the immunity-related GTPases Irga6 and Irgb6 at the vacuole of Toxoplasma gondii is dependent on the parasite virulence.</title>
        <authorList>
            <person name="Lubitz F.P."/>
            <person name="Degrandi D."/>
            <person name="Pfeffer K."/>
            <person name="Mausberg A.K."/>
        </authorList>
    </citation>
    <scope>FUNCTION</scope>
    <scope>SUBCELLULAR LOCATION</scope>
</reference>
<reference key="19">
    <citation type="journal article" date="2014" name="Proc. Natl. Acad. Sci. U.S.A.">
        <title>Toxoplasma GRA7 effector increases turnover of immunity-related GTPases and contributes to acute virulence in the mouse.</title>
        <authorList>
            <person name="Alaganan A."/>
            <person name="Fentress S.J."/>
            <person name="Tang K."/>
            <person name="Wang Q."/>
            <person name="Sibley L.D."/>
        </authorList>
    </citation>
    <scope>FUNCTION</scope>
    <scope>CATALYTIC ACTIVITY</scope>
    <scope>SUBUNIT</scope>
    <scope>SUBUNIT (MICROBIAL INFECTION)</scope>
    <scope>SUBCELLULAR LOCATION (MICROBIAL INFECTION)</scope>
    <scope>MUTAGENESIS OF THR-102 AND THR-108</scope>
</reference>
<reference key="20">
    <citation type="journal article" date="2003" name="J. Biol. Chem.">
        <title>IIGP1, an interferon-gamma-inducible 47-kDa GTPase of the mouse, showing cooperative enzymatic activity and GTP-dependent multimerization.</title>
        <authorList>
            <person name="Uthaiah R.C."/>
            <person name="Praefcke G.J.K."/>
            <person name="Howard J.C."/>
            <person name="Herrmann C."/>
        </authorList>
    </citation>
    <scope>X-RAY CRYSTALLOGRAPHY (2.0 ANGSTROMS) OF 1-411 IN COMPLEX WITH GDP</scope>
    <scope>FUNCTION</scope>
    <scope>SUBUNIT</scope>
    <scope>CATALYTIC ACTIVITY</scope>
</reference>
<reference evidence="19 20" key="21">
    <citation type="journal article" date="2014" name="J. Biol. Chem.">
        <title>The Toxoplasma pseudokinase ROP5 is an allosteric inhibitor of the immunity-related GTPases.</title>
        <authorList>
            <person name="Reese M.L."/>
            <person name="Shah N."/>
            <person name="Boothroyd J.C."/>
        </authorList>
    </citation>
    <scope>X-RAY CRYSTALLOGRAPHY (1.70 ANGSTROMS) IN COMPLEX WITH TOXOPLASMA ROP5 AND GDP</scope>
    <scope>CATALYTIC ACTIVITY</scope>
    <scope>INTERACTION WITH TOXOPLASMA ROP5 (MICROBIAL INFECTION)</scope>
    <scope>DISULFIDE BOND</scope>
</reference>
<proteinExistence type="evidence at protein level"/>
<organism>
    <name type="scientific">Mus musculus</name>
    <name type="common">Mouse</name>
    <dbReference type="NCBI Taxonomy" id="10090"/>
    <lineage>
        <taxon>Eukaryota</taxon>
        <taxon>Metazoa</taxon>
        <taxon>Chordata</taxon>
        <taxon>Craniata</taxon>
        <taxon>Vertebrata</taxon>
        <taxon>Euteleostomi</taxon>
        <taxon>Mammalia</taxon>
        <taxon>Eutheria</taxon>
        <taxon>Euarchontoglires</taxon>
        <taxon>Glires</taxon>
        <taxon>Rodentia</taxon>
        <taxon>Myomorpha</taxon>
        <taxon>Muroidea</taxon>
        <taxon>Muridae</taxon>
        <taxon>Murinae</taxon>
        <taxon>Mus</taxon>
        <taxon>Mus</taxon>
    </lineage>
</organism>